<name>HYPDA_CLODI</name>
<keyword id="KW-0004">4Fe-4S</keyword>
<keyword id="KW-0408">Iron</keyword>
<keyword id="KW-0411">Iron-sulfur</keyword>
<keyword id="KW-0479">Metal-binding</keyword>
<keyword id="KW-0560">Oxidoreductase</keyword>
<keyword id="KW-0677">Repeat</keyword>
<keyword id="KW-0949">S-adenosyl-L-methionine</keyword>
<accession>A0A069AMK2</accession>
<sequence>MNPLVINLQKCSIHDGPGIRSTVFFKGCPLECVWCHNPESQTYTKQVLYNEERCSKCEACINICPHKAIYKGETKICLDQDKCEFCETCLDYCVNNAREIVGQEYSVRDLVKEIEKDRIFYEESGGGVTLSGGEVMAQDMDFICGVINMCKSKGIHVAIDTCGYAKSENYERVAKCADLFLYDIKLIDEDKHIKFTGKSNDLILKNVKILSELGANINIRIPLIVGVNVDDENLEVKKMIEFLKPLNIQAVSLLPYHNIGKHKYDKIYKKYEGEELQRPSEEKLEEIKRLFEASNFNTKIGG</sequence>
<reference key="1">
    <citation type="submission" date="2014-07" db="EMBL/GenBank/DDBJ databases">
        <authorList>
            <person name="Monot M."/>
        </authorList>
    </citation>
    <scope>NUCLEOTIDE SEQUENCE [LARGE SCALE GENOMIC DNA]</scope>
    <source>
        <strain evidence="13">7032989</strain>
        <strain evidence="11">7032994</strain>
    </source>
</reference>
<reference key="2">
    <citation type="submission" date="2016-11" db="EMBL/GenBank/DDBJ databases">
        <title>Genomic characterization of C. difficile isolates from children.</title>
        <authorList>
            <person name="Kociolek L.K."/>
            <person name="Ozer E.A."/>
        </authorList>
    </citation>
    <scope>NUCLEOTIDE SEQUENCE [LARGE SCALE GENOMIC DNA]</scope>
    <source>
        <strain evidence="14">6636-R/ST48</strain>
    </source>
</reference>
<reference key="3">
    <citation type="submission" date="2017-02" db="EMBL/GenBank/DDBJ databases">
        <authorList>
            <consortium name="Pathogen Informatics"/>
        </authorList>
    </citation>
    <scope>NUCLEOTIDE SEQUENCE [LARGE SCALE GENOMIC DNA]</scope>
    <source>
        <strain evidence="16">VRECD0007</strain>
    </source>
</reference>
<reference key="4">
    <citation type="submission" date="2018-03" db="EMBL/GenBank/DDBJ databases">
        <title>Clinical sequencing of C. difficile.</title>
        <authorList>
            <person name="Stone N."/>
            <person name="Sahl J."/>
            <person name="Wagner D."/>
        </authorList>
    </citation>
    <scope>NUCLEOTIDE SEQUENCE [LARGE SCALE GENOMIC DNA]</scope>
    <source>
        <strain evidence="15">HS-FS_0042_01</strain>
    </source>
</reference>
<reference key="5">
    <citation type="submission" date="2018-04" db="EMBL/GenBank/DDBJ databases">
        <authorList>
            <person name="Su H."/>
        </authorList>
    </citation>
    <scope>NUCLEOTIDE SEQUENCE [LARGE SCALE GENOMIC DNA]</scope>
    <source>
        <strain evidence="10">CD161</strain>
    </source>
</reference>
<reference key="6">
    <citation type="journal article" date="2017" name="Science">
        <title>A prominent glycyl radical enzyme in human gut microbiomes metabolizes trans-4-hydroxy-L-proline.</title>
        <authorList>
            <person name="Levin B.J."/>
            <person name="Huang Y.Y."/>
            <person name="Peck S.C."/>
            <person name="Wei Y."/>
            <person name="Martinez-Del Campo A."/>
            <person name="Marks J.A."/>
            <person name="Franzosa E.A."/>
            <person name="Huttenhower C."/>
            <person name="Balskus E.P."/>
        </authorList>
    </citation>
    <scope>FUNCTION</scope>
    <source>
        <strain>70-100-2010</strain>
    </source>
</reference>
<evidence type="ECO:0000250" key="1">
    <source>
        <dbReference type="UniProtKB" id="P0A9N4"/>
    </source>
</evidence>
<evidence type="ECO:0000250" key="2">
    <source>
        <dbReference type="UniProtKB" id="Q30W71"/>
    </source>
</evidence>
<evidence type="ECO:0000255" key="3">
    <source>
        <dbReference type="PROSITE-ProRule" id="PRU00711"/>
    </source>
</evidence>
<evidence type="ECO:0000255" key="4">
    <source>
        <dbReference type="PROSITE-ProRule" id="PRU01266"/>
    </source>
</evidence>
<evidence type="ECO:0000269" key="5">
    <source>
    </source>
</evidence>
<evidence type="ECO:0000303" key="6">
    <source>
    </source>
</evidence>
<evidence type="ECO:0000303" key="7">
    <source ref="1"/>
</evidence>
<evidence type="ECO:0000305" key="8"/>
<evidence type="ECO:0000305" key="9">
    <source>
    </source>
</evidence>
<evidence type="ECO:0000312" key="10">
    <source>
        <dbReference type="EMBL" id="AWH82816.1"/>
    </source>
</evidence>
<evidence type="ECO:0000312" key="11">
    <source>
        <dbReference type="EMBL" id="CDS85121.1"/>
    </source>
</evidence>
<evidence type="ECO:0000312" key="12">
    <source>
        <dbReference type="EMBL" id="CDS89457.1"/>
    </source>
</evidence>
<evidence type="ECO:0000312" key="13">
    <source>
        <dbReference type="EMBL" id="CDT69048.1"/>
    </source>
</evidence>
<evidence type="ECO:0000312" key="14">
    <source>
        <dbReference type="EMBL" id="PBG28509.1"/>
    </source>
</evidence>
<evidence type="ECO:0000312" key="15">
    <source>
        <dbReference type="EMBL" id="PSJ82865.1"/>
    </source>
</evidence>
<evidence type="ECO:0000312" key="16">
    <source>
        <dbReference type="EMBL" id="SJP87434.1"/>
    </source>
</evidence>
<dbReference type="EC" id="1.97.1.-" evidence="9"/>
<dbReference type="EMBL" id="LK932372">
    <property type="protein sequence ID" value="CDS85121.1"/>
    <property type="molecule type" value="Genomic_DNA"/>
</dbReference>
<dbReference type="EMBL" id="LK932529">
    <property type="protein sequence ID" value="CDS89457.1"/>
    <property type="molecule type" value="Genomic_DNA"/>
</dbReference>
<dbReference type="EMBL" id="LK933338">
    <property type="protein sequence ID" value="CDT69048.1"/>
    <property type="molecule type" value="Genomic_DNA"/>
</dbReference>
<dbReference type="EMBL" id="MPEQ01000010">
    <property type="protein sequence ID" value="PBG28509.1"/>
    <property type="molecule type" value="Genomic_DNA"/>
</dbReference>
<dbReference type="EMBL" id="FUNQ01000002">
    <property type="protein sequence ID" value="SJP87434.1"/>
    <property type="molecule type" value="Genomic_DNA"/>
</dbReference>
<dbReference type="EMBL" id="PXZF01000010">
    <property type="protein sequence ID" value="PSJ82865.1"/>
    <property type="molecule type" value="Genomic_DNA"/>
</dbReference>
<dbReference type="EMBL" id="CP029154">
    <property type="protein sequence ID" value="AWH82816.1"/>
    <property type="molecule type" value="Genomic_DNA"/>
</dbReference>
<dbReference type="RefSeq" id="WP_003432388.1">
    <property type="nucleotide sequence ID" value="NZ_WBMC01000016.1"/>
</dbReference>
<dbReference type="SMR" id="A0A069AMK2"/>
<dbReference type="PATRIC" id="fig|1496.1371.peg.375"/>
<dbReference type="GO" id="GO:0051539">
    <property type="term" value="F:4 iron, 4 sulfur cluster binding"/>
    <property type="evidence" value="ECO:0000250"/>
    <property type="project" value="UniProtKB"/>
</dbReference>
<dbReference type="GO" id="GO:0043364">
    <property type="term" value="F:glycyl-radical enzyme activating activity"/>
    <property type="evidence" value="ECO:0000314"/>
    <property type="project" value="UniProtKB"/>
</dbReference>
<dbReference type="GO" id="GO:0046872">
    <property type="term" value="F:metal ion binding"/>
    <property type="evidence" value="ECO:0007669"/>
    <property type="project" value="UniProtKB-KW"/>
</dbReference>
<dbReference type="GO" id="GO:0019471">
    <property type="term" value="P:4-hydroxyproline metabolic process"/>
    <property type="evidence" value="ECO:0007669"/>
    <property type="project" value="InterPro"/>
</dbReference>
<dbReference type="Gene3D" id="3.30.70.20">
    <property type="match status" value="1"/>
</dbReference>
<dbReference type="Gene3D" id="3.20.20.70">
    <property type="entry name" value="Aldolase class I"/>
    <property type="match status" value="1"/>
</dbReference>
<dbReference type="InterPro" id="IPR017896">
    <property type="entry name" value="4Fe4S_Fe-S-bd"/>
</dbReference>
<dbReference type="InterPro" id="IPR017900">
    <property type="entry name" value="4Fe4S_Fe_S_CS"/>
</dbReference>
<dbReference type="InterPro" id="IPR013785">
    <property type="entry name" value="Aldolase_TIM"/>
</dbReference>
<dbReference type="InterPro" id="IPR040074">
    <property type="entry name" value="BssD/PflA/YjjW"/>
</dbReference>
<dbReference type="InterPro" id="IPR034457">
    <property type="entry name" value="Organic_radical-activating"/>
</dbReference>
<dbReference type="InterPro" id="IPR012839">
    <property type="entry name" value="Organic_radical_activase"/>
</dbReference>
<dbReference type="InterPro" id="IPR001989">
    <property type="entry name" value="Radical_activat_CS"/>
</dbReference>
<dbReference type="InterPro" id="IPR007197">
    <property type="entry name" value="rSAM"/>
</dbReference>
<dbReference type="InterPro" id="IPR050014">
    <property type="entry name" value="T4HPD_activ_SAM"/>
</dbReference>
<dbReference type="NCBIfam" id="TIGR02494">
    <property type="entry name" value="PFLE_PFLC"/>
    <property type="match status" value="1"/>
</dbReference>
<dbReference type="NCBIfam" id="NF043069">
    <property type="entry name" value="T4HPD_activ_SAM"/>
    <property type="match status" value="1"/>
</dbReference>
<dbReference type="PANTHER" id="PTHR30352:SF4">
    <property type="entry name" value="PYRUVATE FORMATE-LYASE 2-ACTIVATING ENZYME"/>
    <property type="match status" value="1"/>
</dbReference>
<dbReference type="PANTHER" id="PTHR30352">
    <property type="entry name" value="PYRUVATE FORMATE-LYASE-ACTIVATING ENZYME"/>
    <property type="match status" value="1"/>
</dbReference>
<dbReference type="Pfam" id="PF00037">
    <property type="entry name" value="Fer4"/>
    <property type="match status" value="1"/>
</dbReference>
<dbReference type="Pfam" id="PF04055">
    <property type="entry name" value="Radical_SAM"/>
    <property type="match status" value="1"/>
</dbReference>
<dbReference type="PIRSF" id="PIRSF000371">
    <property type="entry name" value="PFL_act_enz"/>
    <property type="match status" value="1"/>
</dbReference>
<dbReference type="SFLD" id="SFLDG01118">
    <property type="entry name" value="activating_enzymes__group_2"/>
    <property type="match status" value="1"/>
</dbReference>
<dbReference type="SFLD" id="SFLDS00029">
    <property type="entry name" value="Radical_SAM"/>
    <property type="match status" value="1"/>
</dbReference>
<dbReference type="SUPFAM" id="SSF54862">
    <property type="entry name" value="4Fe-4S ferredoxins"/>
    <property type="match status" value="1"/>
</dbReference>
<dbReference type="SUPFAM" id="SSF102114">
    <property type="entry name" value="Radical SAM enzymes"/>
    <property type="match status" value="1"/>
</dbReference>
<dbReference type="PROSITE" id="PS00198">
    <property type="entry name" value="4FE4S_FER_1"/>
    <property type="match status" value="1"/>
</dbReference>
<dbReference type="PROSITE" id="PS51379">
    <property type="entry name" value="4FE4S_FER_2"/>
    <property type="match status" value="2"/>
</dbReference>
<dbReference type="PROSITE" id="PS01087">
    <property type="entry name" value="RADICAL_ACTIVATING"/>
    <property type="match status" value="1"/>
</dbReference>
<dbReference type="PROSITE" id="PS51918">
    <property type="entry name" value="RADICAL_SAM"/>
    <property type="match status" value="1"/>
</dbReference>
<gene>
    <name evidence="7" type="primary">pflE</name>
    <name evidence="16" type="synonym">csdA</name>
    <name evidence="14" type="ORF">BGU81_07855</name>
    <name evidence="13" type="ORF">BN1095_640055</name>
    <name evidence="12" type="ORF">BN1096_740113</name>
    <name evidence="11" type="ORF">BN1097_360076</name>
    <name evidence="15" type="ORF">C7R55_12960</name>
    <name evidence="10" type="ORF">DDG63_17935</name>
    <name evidence="16" type="ORF">SAMEA3374989_01496</name>
</gene>
<comment type="function">
    <text evidence="5">Catalyzes activation of the trans-4-hydroxy-L-proline dehydratase under anaerobic conditions by generation of an organic free radical on a glycine residue, via a homolytic cleavage of S-adenosyl-L-methionine (SAM). Is involved in the anaerobic degradation of 4-hydroxyproline.</text>
</comment>
<comment type="catalytic activity">
    <reaction evidence="9">
        <text>glycyl-[protein] + reduced [flavodoxin] + S-adenosyl-L-methionine = glycin-2-yl radical-[protein] + semiquinone [flavodoxin] + 5'-deoxyadenosine + L-methionine + H(+)</text>
        <dbReference type="Rhea" id="RHEA:61976"/>
        <dbReference type="Rhea" id="RHEA-COMP:10622"/>
        <dbReference type="Rhea" id="RHEA-COMP:14480"/>
        <dbReference type="Rhea" id="RHEA-COMP:15993"/>
        <dbReference type="Rhea" id="RHEA-COMP:15994"/>
        <dbReference type="ChEBI" id="CHEBI:15378"/>
        <dbReference type="ChEBI" id="CHEBI:17319"/>
        <dbReference type="ChEBI" id="CHEBI:29947"/>
        <dbReference type="ChEBI" id="CHEBI:32722"/>
        <dbReference type="ChEBI" id="CHEBI:57618"/>
        <dbReference type="ChEBI" id="CHEBI:57844"/>
        <dbReference type="ChEBI" id="CHEBI:59789"/>
        <dbReference type="ChEBI" id="CHEBI:140311"/>
    </reaction>
</comment>
<comment type="cofactor">
    <cofactor evidence="2">
        <name>[4Fe-4S] cluster</name>
        <dbReference type="ChEBI" id="CHEBI:49883"/>
    </cofactor>
    <text evidence="2">Binds 2 [4Fe-4S] cluster. One cluster is coordinated with 3 cysteines and an exchangeable S-adenosyl-L-methionine.</text>
</comment>
<comment type="similarity">
    <text evidence="8">Belongs to the organic radical-activating enzymes family.</text>
</comment>
<proteinExistence type="inferred from homology"/>
<protein>
    <recommendedName>
        <fullName evidence="6">Trans-4-hydroxy-L-proline dehydratase activating enzyme</fullName>
        <ecNumber evidence="9">1.97.1.-</ecNumber>
    </recommendedName>
    <alternativeName>
        <fullName evidence="9">Glycyl-radical enzyme activating enzyme PflE</fullName>
        <shortName evidence="9">GRE activating enzyme</shortName>
    </alternativeName>
</protein>
<feature type="chain" id="PRO_0000445029" description="Trans-4-hydroxy-L-proline dehydratase activating enzyme">
    <location>
        <begin position="1"/>
        <end position="302"/>
    </location>
</feature>
<feature type="domain" description="Radical SAM core" evidence="4">
    <location>
        <begin position="14"/>
        <end position="297"/>
    </location>
</feature>
<feature type="domain" description="4Fe-4S ferredoxin-type 1" evidence="3">
    <location>
        <begin position="45"/>
        <end position="74"/>
    </location>
</feature>
<feature type="domain" description="4Fe-4S ferredoxin-type 2" evidence="3">
    <location>
        <begin position="75"/>
        <end position="103"/>
    </location>
</feature>
<feature type="binding site" evidence="1">
    <location>
        <position position="28"/>
    </location>
    <ligand>
        <name>[4Fe-4S] cluster</name>
        <dbReference type="ChEBI" id="CHEBI:49883"/>
        <label>1</label>
        <note>4Fe-4S-S-AdoMet</note>
    </ligand>
</feature>
<feature type="binding site" evidence="1">
    <location>
        <position position="32"/>
    </location>
    <ligand>
        <name>[4Fe-4S] cluster</name>
        <dbReference type="ChEBI" id="CHEBI:49883"/>
        <label>1</label>
        <note>4Fe-4S-S-AdoMet</note>
    </ligand>
</feature>
<feature type="binding site" evidence="1">
    <location>
        <begin position="34"/>
        <end position="36"/>
    </location>
    <ligand>
        <name>S-adenosyl-L-methionine</name>
        <dbReference type="ChEBI" id="CHEBI:59789"/>
    </ligand>
</feature>
<feature type="binding site" evidence="1">
    <location>
        <position position="35"/>
    </location>
    <ligand>
        <name>[4Fe-4S] cluster</name>
        <dbReference type="ChEBI" id="CHEBI:49883"/>
        <label>1</label>
        <note>4Fe-4S-S-AdoMet</note>
    </ligand>
</feature>
<feature type="binding site" evidence="2">
    <location>
        <position position="54"/>
    </location>
    <ligand>
        <name>[4Fe-4S] cluster</name>
        <dbReference type="ChEBI" id="CHEBI:49883"/>
        <label>2</label>
    </ligand>
</feature>
<feature type="binding site" evidence="2">
    <location>
        <position position="57"/>
    </location>
    <ligand>
        <name>[4Fe-4S] cluster</name>
        <dbReference type="ChEBI" id="CHEBI:49883"/>
        <label>2</label>
    </ligand>
</feature>
<feature type="binding site" evidence="2">
    <location>
        <position position="60"/>
    </location>
    <ligand>
        <name>[4Fe-4S] cluster</name>
        <dbReference type="ChEBI" id="CHEBI:49883"/>
        <label>2</label>
    </ligand>
</feature>
<feature type="binding site" evidence="2">
    <location>
        <position position="93"/>
    </location>
    <ligand>
        <name>[4Fe-4S] cluster</name>
        <dbReference type="ChEBI" id="CHEBI:49883"/>
        <label>2</label>
    </ligand>
</feature>
<feature type="binding site" evidence="1">
    <location>
        <position position="133"/>
    </location>
    <ligand>
        <name>S-adenosyl-L-methionine</name>
        <dbReference type="ChEBI" id="CHEBI:59789"/>
    </ligand>
</feature>
<feature type="binding site" evidence="1">
    <location>
        <begin position="183"/>
        <end position="185"/>
    </location>
    <ligand>
        <name>S-adenosyl-L-methionine</name>
        <dbReference type="ChEBI" id="CHEBI:59789"/>
    </ligand>
</feature>
<feature type="binding site" evidence="1">
    <location>
        <position position="257"/>
    </location>
    <ligand>
        <name>S-adenosyl-L-methionine</name>
        <dbReference type="ChEBI" id="CHEBI:59789"/>
    </ligand>
</feature>
<organism evidence="12">
    <name type="scientific">Clostridioides difficile</name>
    <name type="common">Peptoclostridium difficile</name>
    <dbReference type="NCBI Taxonomy" id="1496"/>
    <lineage>
        <taxon>Bacteria</taxon>
        <taxon>Bacillati</taxon>
        <taxon>Bacillota</taxon>
        <taxon>Clostridia</taxon>
        <taxon>Peptostreptococcales</taxon>
        <taxon>Peptostreptococcaceae</taxon>
        <taxon>Clostridioides</taxon>
    </lineage>
</organism>